<name>COTJA_BACSU</name>
<organism>
    <name type="scientific">Bacillus subtilis (strain 168)</name>
    <dbReference type="NCBI Taxonomy" id="224308"/>
    <lineage>
        <taxon>Bacteria</taxon>
        <taxon>Bacillati</taxon>
        <taxon>Bacillota</taxon>
        <taxon>Bacilli</taxon>
        <taxon>Bacillales</taxon>
        <taxon>Bacillaceae</taxon>
        <taxon>Bacillus</taxon>
    </lineage>
</organism>
<accession>Q45536</accession>
<dbReference type="EMBL" id="L38014">
    <property type="protein sequence ID" value="AAB17588.1"/>
    <property type="molecule type" value="Genomic_DNA"/>
</dbReference>
<dbReference type="EMBL" id="AL009126">
    <property type="protein sequence ID" value="CAB12508.1"/>
    <property type="molecule type" value="Genomic_DNA"/>
</dbReference>
<dbReference type="PIR" id="F69605">
    <property type="entry name" value="F69605"/>
</dbReference>
<dbReference type="RefSeq" id="NP_388570.1">
    <property type="nucleotide sequence ID" value="NC_000964.3"/>
</dbReference>
<dbReference type="RefSeq" id="WP_003219489.1">
    <property type="nucleotide sequence ID" value="NZ_OZ025638.1"/>
</dbReference>
<dbReference type="DIP" id="DIP-381N"/>
<dbReference type="FunCoup" id="Q45536">
    <property type="interactions" value="13"/>
</dbReference>
<dbReference type="STRING" id="224308.BSU06890"/>
<dbReference type="PaxDb" id="224308-BSU06890"/>
<dbReference type="EnsemblBacteria" id="CAB12508">
    <property type="protein sequence ID" value="CAB12508"/>
    <property type="gene ID" value="BSU_06890"/>
</dbReference>
<dbReference type="GeneID" id="86874854"/>
<dbReference type="GeneID" id="938758"/>
<dbReference type="KEGG" id="bsu:BSU06890"/>
<dbReference type="PATRIC" id="fig|224308.179.peg.749"/>
<dbReference type="eggNOG" id="ENOG50332J6">
    <property type="taxonomic scope" value="Bacteria"/>
</dbReference>
<dbReference type="InParanoid" id="Q45536"/>
<dbReference type="OrthoDB" id="2376696at2"/>
<dbReference type="BioCyc" id="BSUB:BSU06890-MONOMER"/>
<dbReference type="Proteomes" id="UP000001570">
    <property type="component" value="Chromosome"/>
</dbReference>
<dbReference type="InterPro" id="IPR020256">
    <property type="entry name" value="Spore_coat_CotJA"/>
</dbReference>
<dbReference type="Pfam" id="PF11007">
    <property type="entry name" value="CotJA"/>
    <property type="match status" value="1"/>
</dbReference>
<gene>
    <name type="primary">cotJA</name>
    <name type="ordered locus">BSU06890</name>
</gene>
<feature type="chain" id="PRO_0000079265" description="Protein CotJA">
    <location>
        <begin position="1"/>
        <end position="82"/>
    </location>
</feature>
<reference key="1">
    <citation type="journal article" date="1995" name="J. Bacteriol.">
        <title>Characterization of cotJ, a sigma E-controlled operon affecting the polypeptide composition of the coat of Bacillus subtilis spores.</title>
        <authorList>
            <person name="Henriques A.O."/>
            <person name="Beall B.W."/>
            <person name="Roland K."/>
            <person name="Moran C.P. Jr."/>
        </authorList>
    </citation>
    <scope>NUCLEOTIDE SEQUENCE [GENOMIC DNA]</scope>
    <source>
        <strain>168</strain>
    </source>
</reference>
<reference key="2">
    <citation type="journal article" date="1997" name="Nature">
        <title>The complete genome sequence of the Gram-positive bacterium Bacillus subtilis.</title>
        <authorList>
            <person name="Kunst F."/>
            <person name="Ogasawara N."/>
            <person name="Moszer I."/>
            <person name="Albertini A.M."/>
            <person name="Alloni G."/>
            <person name="Azevedo V."/>
            <person name="Bertero M.G."/>
            <person name="Bessieres P."/>
            <person name="Bolotin A."/>
            <person name="Borchert S."/>
            <person name="Borriss R."/>
            <person name="Boursier L."/>
            <person name="Brans A."/>
            <person name="Braun M."/>
            <person name="Brignell S.C."/>
            <person name="Bron S."/>
            <person name="Brouillet S."/>
            <person name="Bruschi C.V."/>
            <person name="Caldwell B."/>
            <person name="Capuano V."/>
            <person name="Carter N.M."/>
            <person name="Choi S.-K."/>
            <person name="Codani J.-J."/>
            <person name="Connerton I.F."/>
            <person name="Cummings N.J."/>
            <person name="Daniel R.A."/>
            <person name="Denizot F."/>
            <person name="Devine K.M."/>
            <person name="Duesterhoeft A."/>
            <person name="Ehrlich S.D."/>
            <person name="Emmerson P.T."/>
            <person name="Entian K.-D."/>
            <person name="Errington J."/>
            <person name="Fabret C."/>
            <person name="Ferrari E."/>
            <person name="Foulger D."/>
            <person name="Fritz C."/>
            <person name="Fujita M."/>
            <person name="Fujita Y."/>
            <person name="Fuma S."/>
            <person name="Galizzi A."/>
            <person name="Galleron N."/>
            <person name="Ghim S.-Y."/>
            <person name="Glaser P."/>
            <person name="Goffeau A."/>
            <person name="Golightly E.J."/>
            <person name="Grandi G."/>
            <person name="Guiseppi G."/>
            <person name="Guy B.J."/>
            <person name="Haga K."/>
            <person name="Haiech J."/>
            <person name="Harwood C.R."/>
            <person name="Henaut A."/>
            <person name="Hilbert H."/>
            <person name="Holsappel S."/>
            <person name="Hosono S."/>
            <person name="Hullo M.-F."/>
            <person name="Itaya M."/>
            <person name="Jones L.-M."/>
            <person name="Joris B."/>
            <person name="Karamata D."/>
            <person name="Kasahara Y."/>
            <person name="Klaerr-Blanchard M."/>
            <person name="Klein C."/>
            <person name="Kobayashi Y."/>
            <person name="Koetter P."/>
            <person name="Koningstein G."/>
            <person name="Krogh S."/>
            <person name="Kumano M."/>
            <person name="Kurita K."/>
            <person name="Lapidus A."/>
            <person name="Lardinois S."/>
            <person name="Lauber J."/>
            <person name="Lazarevic V."/>
            <person name="Lee S.-M."/>
            <person name="Levine A."/>
            <person name="Liu H."/>
            <person name="Masuda S."/>
            <person name="Mauel C."/>
            <person name="Medigue C."/>
            <person name="Medina N."/>
            <person name="Mellado R.P."/>
            <person name="Mizuno M."/>
            <person name="Moestl D."/>
            <person name="Nakai S."/>
            <person name="Noback M."/>
            <person name="Noone D."/>
            <person name="O'Reilly M."/>
            <person name="Ogawa K."/>
            <person name="Ogiwara A."/>
            <person name="Oudega B."/>
            <person name="Park S.-H."/>
            <person name="Parro V."/>
            <person name="Pohl T.M."/>
            <person name="Portetelle D."/>
            <person name="Porwollik S."/>
            <person name="Prescott A.M."/>
            <person name="Presecan E."/>
            <person name="Pujic P."/>
            <person name="Purnelle B."/>
            <person name="Rapoport G."/>
            <person name="Rey M."/>
            <person name="Reynolds S."/>
            <person name="Rieger M."/>
            <person name="Rivolta C."/>
            <person name="Rocha E."/>
            <person name="Roche B."/>
            <person name="Rose M."/>
            <person name="Sadaie Y."/>
            <person name="Sato T."/>
            <person name="Scanlan E."/>
            <person name="Schleich S."/>
            <person name="Schroeter R."/>
            <person name="Scoffone F."/>
            <person name="Sekiguchi J."/>
            <person name="Sekowska A."/>
            <person name="Seror S.J."/>
            <person name="Serror P."/>
            <person name="Shin B.-S."/>
            <person name="Soldo B."/>
            <person name="Sorokin A."/>
            <person name="Tacconi E."/>
            <person name="Takagi T."/>
            <person name="Takahashi H."/>
            <person name="Takemaru K."/>
            <person name="Takeuchi M."/>
            <person name="Tamakoshi A."/>
            <person name="Tanaka T."/>
            <person name="Terpstra P."/>
            <person name="Tognoni A."/>
            <person name="Tosato V."/>
            <person name="Uchiyama S."/>
            <person name="Vandenbol M."/>
            <person name="Vannier F."/>
            <person name="Vassarotti A."/>
            <person name="Viari A."/>
            <person name="Wambutt R."/>
            <person name="Wedler E."/>
            <person name="Wedler H."/>
            <person name="Weitzenegger T."/>
            <person name="Winters P."/>
            <person name="Wipat A."/>
            <person name="Yamamoto H."/>
            <person name="Yamane K."/>
            <person name="Yasumoto K."/>
            <person name="Yata K."/>
            <person name="Yoshida K."/>
            <person name="Yoshikawa H.-F."/>
            <person name="Zumstein E."/>
            <person name="Yoshikawa H."/>
            <person name="Danchin A."/>
        </authorList>
    </citation>
    <scope>NUCLEOTIDE SEQUENCE [LARGE SCALE GENOMIC DNA]</scope>
    <source>
        <strain>168</strain>
    </source>
</reference>
<proteinExistence type="predicted"/>
<protein>
    <recommendedName>
        <fullName>Protein CotJA</fullName>
    </recommendedName>
</protein>
<sequence length="82" mass="9739">MKDMQPFTPVKSYTPFHSRFDPCPPIGKKYYRTPPNLYMTFQPEHMEQFSPMEALRKGTLWKDLYDFYENPYRGGDAHGKKG</sequence>
<comment type="function">
    <text>The cotJ operon proteins affect spore coat composition. They are either required for the normal formation of the inner layers of the coat or are themselves structural components of the coat.</text>
</comment>
<keyword id="KW-1185">Reference proteome</keyword>